<evidence type="ECO:0000250" key="1">
    <source>
        <dbReference type="UniProtKB" id="K9UJK2"/>
    </source>
</evidence>
<evidence type="ECO:0000250" key="2">
    <source>
        <dbReference type="UniProtKB" id="Q9BSA9"/>
    </source>
</evidence>
<evidence type="ECO:0000255" key="3"/>
<evidence type="ECO:0000256" key="4">
    <source>
        <dbReference type="SAM" id="MobiDB-lite"/>
    </source>
</evidence>
<evidence type="ECO:0000269" key="5">
    <source>
    </source>
</evidence>
<evidence type="ECO:0000305" key="6"/>
<evidence type="ECO:0000305" key="7">
    <source>
    </source>
</evidence>
<evidence type="ECO:0000312" key="8">
    <source>
        <dbReference type="RGD" id="1309712"/>
    </source>
</evidence>
<organism>
    <name type="scientific">Rattus norvegicus</name>
    <name type="common">Rat</name>
    <dbReference type="NCBI Taxonomy" id="10116"/>
    <lineage>
        <taxon>Eukaryota</taxon>
        <taxon>Metazoa</taxon>
        <taxon>Chordata</taxon>
        <taxon>Craniata</taxon>
        <taxon>Vertebrata</taxon>
        <taxon>Euteleostomi</taxon>
        <taxon>Mammalia</taxon>
        <taxon>Eutheria</taxon>
        <taxon>Euarchontoglires</taxon>
        <taxon>Glires</taxon>
        <taxon>Rodentia</taxon>
        <taxon>Myomorpha</taxon>
        <taxon>Muroidea</taxon>
        <taxon>Muridae</taxon>
        <taxon>Murinae</taxon>
        <taxon>Rattus</taxon>
    </lineage>
</organism>
<comment type="function">
    <text evidence="2 7">Proton-activated proton channel that catalyzes proton efflux from endosomes and lysosomes to maintain a steady-state pH (By similarity). Activated at low pH (under pH 4.6) by luminal side protons: selectively mediates lysosomal proton release from lysosomes, eliciting a proton leak that balances V-ATPase activity to maintain pH homeostasis (By similarity). Regulation of lumenal pH stability is required for autophagosome-lysosome fusion (By similarity). Also acts as a potassium channel at higher pH, regulating potassium conductance in endosomes and lysosomes (By similarity). Constitutes the pore-forming subunit of the lysoK(GF) complex, a complex activated by extracellular growth factors (By similarity). The lysoK(GF) complex is composed of TMEM175 and AKT (AKT1, AKT2 or AKT3), a major target of growth factor receptors: in the complex, TMEM175 channel is opened by conformational changes by AKT, leading to its activation (By similarity). The lysoK(GF) complex is required to protect neurons against stress-induced damage (Probable) (PubMed:32799888).</text>
</comment>
<comment type="catalytic activity">
    <reaction evidence="2">
        <text>H(+)(in) = H(+)(out)</text>
        <dbReference type="Rhea" id="RHEA:34979"/>
        <dbReference type="ChEBI" id="CHEBI:15378"/>
    </reaction>
</comment>
<comment type="catalytic activity">
    <reaction evidence="2">
        <text>K(+)(in) = K(+)(out)</text>
        <dbReference type="Rhea" id="RHEA:29463"/>
        <dbReference type="ChEBI" id="CHEBI:29103"/>
    </reaction>
</comment>
<comment type="activity regulation">
    <text evidence="2">Active at low pH (under pH 4.6): proton channel activity is activated by luminal side protons. Polyunsaturated fatty acids, such as arachidonic acid, also activate the channel activity. Proton channel activity is directly inhibited by LAMP1 or LAMP2, facilitating lysosomal acidification. Channel activity is activated following interaction with AKT (AKT1, AKT2 or AKT3): interaction promotes activation from closed to an open state. Activation by AKT is independent of AKT serine/threonine-protein kinase activity.</text>
</comment>
<comment type="subunit">
    <text evidence="2">Homodimer. Interacts with AKT (AKT1, AKT2 or AKT3); leading to formation of the lysoK(GF) complex, which activates the channel. Interacts with LAMP1; inhibiting the proton channel activity of TMEM175. Interacts with LAMP2; inhibiting the proton channel activity of TMEM175.</text>
</comment>
<comment type="subcellular location">
    <subcellularLocation>
        <location evidence="2">Endosome membrane</location>
        <topology evidence="3">Multi-pass membrane protein</topology>
    </subcellularLocation>
    <subcellularLocation>
        <location evidence="5">Lysosome membrane</location>
        <topology evidence="3">Multi-pass membrane protein</topology>
    </subcellularLocation>
</comment>
<comment type="domain">
    <text evidence="2">Composed of two modules of six transmembranes, forming a homodimer with a tetrameric architecture. The six transmembrane regions of each module are tightly packed within each subunit without undergoing domain swapping. Forms a central ion-conduction pore lined by the side chains of the pore-lining helices. Conserved isoleucine residues (Ile-43 in the first module and Ile-268 in the second module) in the center of the pore serve as the gate in the closed conformation. In the widened channel in the open conformation, the same residues establish a constriction essential for potassium selectivity.</text>
</comment>
<comment type="similarity">
    <text evidence="6">Belongs to the TMEM175 family.</text>
</comment>
<feature type="chain" id="PRO_0000282590" description="Endosomal/lysosomal proton channel TMEM175">
    <location>
        <begin position="1"/>
        <end position="499"/>
    </location>
</feature>
<feature type="topological domain" description="Cytoplasmic" evidence="2">
    <location>
        <begin position="1"/>
        <end position="30"/>
    </location>
</feature>
<feature type="transmembrane region" description="Helical; Name=TM1-1" evidence="2">
    <location>
        <begin position="31"/>
        <end position="53"/>
    </location>
</feature>
<feature type="topological domain" description="Lumenal" evidence="2">
    <location>
        <begin position="54"/>
        <end position="74"/>
    </location>
</feature>
<feature type="transmembrane region" description="Helical; Name=TM2-1" evidence="2">
    <location>
        <begin position="75"/>
        <end position="97"/>
    </location>
</feature>
<feature type="topological domain" description="Cytoplasmic" evidence="2">
    <location>
        <begin position="98"/>
        <end position="103"/>
    </location>
</feature>
<feature type="transmembrane region" description="Helical; Name=TM3-1" evidence="2">
    <location>
        <begin position="104"/>
        <end position="125"/>
    </location>
</feature>
<feature type="topological domain" description="Lumenal" evidence="2">
    <location>
        <begin position="126"/>
        <end position="135"/>
    </location>
</feature>
<feature type="transmembrane region" description="Helical; Name=TM4-1" evidence="2">
    <location>
        <begin position="136"/>
        <end position="157"/>
    </location>
</feature>
<feature type="topological domain" description="Cytoplasmic" evidence="2">
    <location>
        <begin position="158"/>
        <end position="181"/>
    </location>
</feature>
<feature type="transmembrane region" description="Helical; Name=TM5-1" evidence="3">
    <location>
        <begin position="182"/>
        <end position="202"/>
    </location>
</feature>
<feature type="topological domain" description="Lumenal" evidence="2">
    <location>
        <begin position="203"/>
        <end position="207"/>
    </location>
</feature>
<feature type="transmembrane region" description="Helical; Name=TM6-1" evidence="3">
    <location>
        <begin position="208"/>
        <end position="227"/>
    </location>
</feature>
<feature type="topological domain" description="Cytoplasmic" evidence="2">
    <location>
        <begin position="228"/>
        <end position="254"/>
    </location>
</feature>
<feature type="transmembrane region" description="Helical; Name=TM1-2" evidence="2">
    <location>
        <begin position="255"/>
        <end position="279"/>
    </location>
</feature>
<feature type="topological domain" description="Lumenal" evidence="2">
    <location>
        <begin position="280"/>
        <end position="306"/>
    </location>
</feature>
<feature type="transmembrane region" description="Helical; Name=TM2-2" evidence="2">
    <location>
        <begin position="307"/>
        <end position="329"/>
    </location>
</feature>
<feature type="topological domain" description="Cytoplasmic" evidence="2">
    <location>
        <begin position="330"/>
        <end position="335"/>
    </location>
</feature>
<feature type="transmembrane region" description="Helical; Name=TM3-2" evidence="2">
    <location>
        <begin position="336"/>
        <end position="357"/>
    </location>
</feature>
<feature type="topological domain" description="Lumenal" evidence="2">
    <location>
        <begin position="358"/>
        <end position="372"/>
    </location>
</feature>
<feature type="transmembrane region" description="Helical; Name=TM4-2" evidence="2">
    <location>
        <begin position="373"/>
        <end position="393"/>
    </location>
</feature>
<feature type="topological domain" description="Cytoplasmic" evidence="2">
    <location>
        <begin position="394"/>
        <end position="413"/>
    </location>
</feature>
<feature type="transmembrane region" description="Helical; Name=TM5-2" evidence="2">
    <location>
        <begin position="414"/>
        <end position="437"/>
    </location>
</feature>
<feature type="topological domain" description="Lumenal" evidence="2">
    <location>
        <begin position="438"/>
        <end position="439"/>
    </location>
</feature>
<feature type="transmembrane region" description="Helical; Name=TM6-2" evidence="2">
    <location>
        <begin position="440"/>
        <end position="466"/>
    </location>
</feature>
<feature type="topological domain" description="Cytoplasmic" evidence="2">
    <location>
        <begin position="467"/>
        <end position="499"/>
    </location>
</feature>
<feature type="region of interest" description="Disordered" evidence="4">
    <location>
        <begin position="1"/>
        <end position="26"/>
    </location>
</feature>
<feature type="region of interest" description="Short helix H1-1" evidence="1">
    <location>
        <begin position="55"/>
        <end position="60"/>
    </location>
</feature>
<feature type="region of interest" description="Short helix H2-1" evidence="1">
    <location>
        <begin position="62"/>
        <end position="68"/>
    </location>
</feature>
<feature type="region of interest" description="Short helix H1-2" evidence="1">
    <location>
        <begin position="285"/>
        <end position="293"/>
    </location>
</feature>
<feature type="region of interest" description="Short helix H2-2" evidence="1">
    <location>
        <begin position="295"/>
        <end position="301"/>
    </location>
</feature>
<feature type="short sequence motif" description="RxxxFSD motif 1" evidence="2">
    <location>
        <begin position="32"/>
        <end position="38"/>
    </location>
</feature>
<feature type="short sequence motif" description="RxxxFSD motif 2" evidence="2">
    <location>
        <begin position="257"/>
        <end position="263"/>
    </location>
</feature>
<feature type="compositionally biased region" description="Polar residues" evidence="4">
    <location>
        <begin position="1"/>
        <end position="10"/>
    </location>
</feature>
<feature type="site" description="Hydrophobic filter residue 1-1" evidence="2">
    <location>
        <position position="43"/>
    </location>
</feature>
<feature type="site" description="Hydrophobic filter residue 2-1" evidence="1">
    <location>
        <position position="47"/>
    </location>
</feature>
<feature type="site" description="Hydrophobic filter residue 3-1" evidence="1">
    <location>
        <position position="50"/>
    </location>
</feature>
<feature type="site" description="Hydrophobic filter residue 1-2" evidence="2">
    <location>
        <position position="268"/>
    </location>
</feature>
<feature type="site" description="Hydrophobic filter residue 2-2" evidence="1">
    <location>
        <position position="272"/>
    </location>
</feature>
<feature type="site" description="Hydrophobic filter residue 3-2" evidence="1">
    <location>
        <position position="275"/>
    </location>
</feature>
<name>TM175_RAT</name>
<dbReference type="EMBL" id="BC079245">
    <property type="protein sequence ID" value="AAH79245.1"/>
    <property type="molecule type" value="mRNA"/>
</dbReference>
<dbReference type="RefSeq" id="NP_001014013.1">
    <property type="nucleotide sequence ID" value="NM_001013991.1"/>
</dbReference>
<dbReference type="RefSeq" id="XP_006250620.1">
    <property type="nucleotide sequence ID" value="XM_006250558.5"/>
</dbReference>
<dbReference type="RefSeq" id="XP_017454749.1">
    <property type="nucleotide sequence ID" value="XM_017599260.1"/>
</dbReference>
<dbReference type="SMR" id="Q6AY05"/>
<dbReference type="FunCoup" id="Q6AY05">
    <property type="interactions" value="2551"/>
</dbReference>
<dbReference type="STRING" id="10116.ENSRNOP00000000050"/>
<dbReference type="PhosphoSitePlus" id="Q6AY05"/>
<dbReference type="PaxDb" id="10116-ENSRNOP00000000050"/>
<dbReference type="Ensembl" id="ENSRNOT00000000050.7">
    <property type="protein sequence ID" value="ENSRNOP00000000050.3"/>
    <property type="gene ID" value="ENSRNOG00000000044.7"/>
</dbReference>
<dbReference type="GeneID" id="305623"/>
<dbReference type="KEGG" id="rno:305623"/>
<dbReference type="UCSC" id="RGD:1309712">
    <property type="organism name" value="rat"/>
</dbReference>
<dbReference type="AGR" id="RGD:1309712"/>
<dbReference type="CTD" id="84286"/>
<dbReference type="RGD" id="1309712">
    <property type="gene designation" value="Tmem175"/>
</dbReference>
<dbReference type="eggNOG" id="ENOG502QR5C">
    <property type="taxonomic scope" value="Eukaryota"/>
</dbReference>
<dbReference type="GeneTree" id="ENSGT00390000015667"/>
<dbReference type="HOGENOM" id="CLU_052593_0_0_1"/>
<dbReference type="InParanoid" id="Q6AY05"/>
<dbReference type="OMA" id="FFFPVSY"/>
<dbReference type="OrthoDB" id="203835at2759"/>
<dbReference type="PhylomeDB" id="Q6AY05"/>
<dbReference type="TreeFam" id="TF328838"/>
<dbReference type="PRO" id="PR:Q6AY05"/>
<dbReference type="Proteomes" id="UP000002494">
    <property type="component" value="Chromosome 14"/>
</dbReference>
<dbReference type="Bgee" id="ENSRNOG00000000044">
    <property type="expression patterns" value="Expressed in testis and 18 other cell types or tissues"/>
</dbReference>
<dbReference type="GO" id="GO:0005768">
    <property type="term" value="C:endosome"/>
    <property type="evidence" value="ECO:0000250"/>
    <property type="project" value="UniProtKB"/>
</dbReference>
<dbReference type="GO" id="GO:0010008">
    <property type="term" value="C:endosome membrane"/>
    <property type="evidence" value="ECO:0000250"/>
    <property type="project" value="UniProtKB"/>
</dbReference>
<dbReference type="GO" id="GO:0005765">
    <property type="term" value="C:lysosomal membrane"/>
    <property type="evidence" value="ECO:0000250"/>
    <property type="project" value="UniProtKB"/>
</dbReference>
<dbReference type="GO" id="GO:0005764">
    <property type="term" value="C:lysosome"/>
    <property type="evidence" value="ECO:0000250"/>
    <property type="project" value="UniProtKB"/>
</dbReference>
<dbReference type="GO" id="GO:0050544">
    <property type="term" value="F:arachidonate binding"/>
    <property type="evidence" value="ECO:0000250"/>
    <property type="project" value="UniProtKB"/>
</dbReference>
<dbReference type="GO" id="GO:0005267">
    <property type="term" value="F:potassium channel activity"/>
    <property type="evidence" value="ECO:0000250"/>
    <property type="project" value="UniProtKB"/>
</dbReference>
<dbReference type="GO" id="GO:0022841">
    <property type="term" value="F:potassium ion leak channel activity"/>
    <property type="evidence" value="ECO:0000250"/>
    <property type="project" value="UniProtKB"/>
</dbReference>
<dbReference type="GO" id="GO:0015252">
    <property type="term" value="F:proton channel activity"/>
    <property type="evidence" value="ECO:0000250"/>
    <property type="project" value="UniProtKB"/>
</dbReference>
<dbReference type="GO" id="GO:0035752">
    <property type="term" value="P:lysosomal lumen pH elevation"/>
    <property type="evidence" value="ECO:0000250"/>
    <property type="project" value="UniProtKB"/>
</dbReference>
<dbReference type="GO" id="GO:0070050">
    <property type="term" value="P:neuron cellular homeostasis"/>
    <property type="evidence" value="ECO:0000250"/>
    <property type="project" value="UniProtKB"/>
</dbReference>
<dbReference type="GO" id="GO:0090385">
    <property type="term" value="P:phagosome-lysosome fusion"/>
    <property type="evidence" value="ECO:0000250"/>
    <property type="project" value="UniProtKB"/>
</dbReference>
<dbReference type="GO" id="GO:0071805">
    <property type="term" value="P:potassium ion transmembrane transport"/>
    <property type="evidence" value="ECO:0000250"/>
    <property type="project" value="UniProtKB"/>
</dbReference>
<dbReference type="GO" id="GO:1902600">
    <property type="term" value="P:proton transmembrane transport"/>
    <property type="evidence" value="ECO:0000250"/>
    <property type="project" value="UniProtKB"/>
</dbReference>
<dbReference type="GO" id="GO:0035751">
    <property type="term" value="P:regulation of lysosomal lumen pH"/>
    <property type="evidence" value="ECO:0000250"/>
    <property type="project" value="UniProtKB"/>
</dbReference>
<dbReference type="InterPro" id="IPR010617">
    <property type="entry name" value="TMEM175-like"/>
</dbReference>
<dbReference type="PANTHER" id="PTHR31462">
    <property type="entry name" value="ENDOSOMAL/LYSOSOMAL POTASSIUM CHANNEL TMEM175"/>
    <property type="match status" value="1"/>
</dbReference>
<dbReference type="PANTHER" id="PTHR31462:SF5">
    <property type="entry name" value="ENDOSOMAL_LYSOSOMAL PROTON CHANNEL TMEM175"/>
    <property type="match status" value="1"/>
</dbReference>
<dbReference type="Pfam" id="PF06736">
    <property type="entry name" value="TMEM175"/>
    <property type="match status" value="2"/>
</dbReference>
<gene>
    <name evidence="8" type="primary">Tmem175</name>
</gene>
<protein>
    <recommendedName>
        <fullName evidence="6">Endosomal/lysosomal proton channel TMEM175</fullName>
    </recommendedName>
    <alternativeName>
        <fullName evidence="6">Potassium channel TMEM175</fullName>
    </alternativeName>
    <alternativeName>
        <fullName evidence="2">Transmembrane protein 175</fullName>
    </alternativeName>
</protein>
<reference key="1">
    <citation type="journal article" date="2004" name="Genome Res.">
        <title>The status, quality, and expansion of the NIH full-length cDNA project: the Mammalian Gene Collection (MGC).</title>
        <authorList>
            <consortium name="The MGC Project Team"/>
        </authorList>
    </citation>
    <scope>NUCLEOTIDE SEQUENCE [LARGE SCALE MRNA]</scope>
    <source>
        <tissue>Testis</tissue>
    </source>
</reference>
<reference key="2">
    <citation type="journal article" date="2013" name="Mol. Cell. Proteomics">
        <title>An extended proteome map of the lysosomal membrane reveals novel potential transporters.</title>
        <authorList>
            <person name="Chapel A."/>
            <person name="Kieffer-Jaquinod S."/>
            <person name="Sagne C."/>
            <person name="Verdon Q."/>
            <person name="Ivaldi C."/>
            <person name="Mellal M."/>
            <person name="Thirion J."/>
            <person name="Jadot M."/>
            <person name="Bruley C."/>
            <person name="Garin J."/>
            <person name="Gasnier B."/>
            <person name="Journet A."/>
        </authorList>
    </citation>
    <scope>SUBCELLULAR LOCATION</scope>
    <scope>IDENTIFICATION BY MASS SPECTROMETRY</scope>
</reference>
<reference key="3">
    <citation type="journal article" date="2020" name="Mol. Brain">
        <title>TMEM175 mediates lysosomal function and participates in neuronal injury induced by cerebral ischemia-reperfusion.</title>
        <authorList>
            <person name="Zhang M."/>
            <person name="Lu H."/>
            <person name="Xie X."/>
            <person name="Shen H."/>
            <person name="Li X."/>
            <person name="Zhang Y."/>
            <person name="Wu J."/>
            <person name="Ni J."/>
            <person name="Li H."/>
            <person name="Chen G."/>
        </authorList>
    </citation>
    <scope>FUNCTION</scope>
</reference>
<proteinExistence type="evidence at protein level"/>
<keyword id="KW-0967">Endosome</keyword>
<keyword id="KW-0407">Ion channel</keyword>
<keyword id="KW-0406">Ion transport</keyword>
<keyword id="KW-0458">Lysosome</keyword>
<keyword id="KW-0472">Membrane</keyword>
<keyword id="KW-0630">Potassium</keyword>
<keyword id="KW-0631">Potassium channel</keyword>
<keyword id="KW-0633">Potassium transport</keyword>
<keyword id="KW-1185">Reference proteome</keyword>
<keyword id="KW-0812">Transmembrane</keyword>
<keyword id="KW-1133">Transmembrane helix</keyword>
<keyword id="KW-0813">Transport</keyword>
<sequence>MSRLQVQEQAVDSEGDSSLYRRDEEGTQSSHRMLGFSDALLSIIATVMILPVTHTEISPEQQFDKSIQKLLATRIAVYLMTFLIVTVAWAAHTRLFQVVGKIDDTLALLNLACMMTITLLPYTFSLMVTFPDVPLGIFLFCMCVIAIGSVQAMIVGYAFHFPHLLNPQIQCSTHRALSRRHILHLVLRGPALCFVAAVFSLFFFPLSYLLMVTVIFLPHISKATTWCKDKFMGHRESPAHNVEPFSIDLHAPLSKERVEAFSDGVYAIVATLLILDICEDNVPDPKDVQQKFSGSLVAALGAYGPQFLAYFGSFATVGLLWFAHHSLFLHVRKATQTMGLFNILSLAFVGGLPLAYQQTSAFARQPRDELERVRVSCAIIFFASIFQFAIWTTALLHQRETLQPAVQFGGQEHAFMFAKLALYPCASLLAFAATCLLSRFSTAIFHLMQIAVPFAFLLLRLLVRLALAGLQVLWDLWPERPQQDQGEPETQSQLLPASC</sequence>
<accession>Q6AY05</accession>